<protein>
    <recommendedName>
        <fullName evidence="2">Small ribosomal subunit protein uS14m</fullName>
    </recommendedName>
</protein>
<proteinExistence type="evidence at protein level"/>
<sequence>MSMFRAKKLDLGCFTNVRVLRDHSKRKAFLEAEPERQALRYVIRNTTLPARTRAVAQLQLTQMHAYTRPTQIRNRCILGGKSRGILRDFKMTRYNFRMNALMGNIPGVKKASW</sequence>
<gene>
    <name type="primary">mrp2</name>
    <name type="ORF">NCU00564</name>
</gene>
<organism>
    <name type="scientific">Neurospora crassa (strain ATCC 24698 / 74-OR23-1A / CBS 708.71 / DSM 1257 / FGSC 987)</name>
    <dbReference type="NCBI Taxonomy" id="367110"/>
    <lineage>
        <taxon>Eukaryota</taxon>
        <taxon>Fungi</taxon>
        <taxon>Dikarya</taxon>
        <taxon>Ascomycota</taxon>
        <taxon>Pezizomycotina</taxon>
        <taxon>Sordariomycetes</taxon>
        <taxon>Sordariomycetidae</taxon>
        <taxon>Sordariales</taxon>
        <taxon>Sordariaceae</taxon>
        <taxon>Neurospora</taxon>
    </lineage>
</organism>
<feature type="chain" id="PRO_0000458577" description="Small ribosomal subunit protein uS14m">
    <location>
        <begin position="1"/>
        <end position="113"/>
    </location>
</feature>
<accession>Q7SF85</accession>
<evidence type="ECO:0000269" key="1">
    <source>
    </source>
</evidence>
<evidence type="ECO:0000303" key="2">
    <source>
    </source>
</evidence>
<evidence type="ECO:0000305" key="3"/>
<evidence type="ECO:0000305" key="4">
    <source>
    </source>
</evidence>
<evidence type="ECO:0007744" key="5">
    <source>
        <dbReference type="PDB" id="6YW5"/>
    </source>
</evidence>
<evidence type="ECO:0007744" key="6">
    <source>
        <dbReference type="PDB" id="6YWX"/>
    </source>
</evidence>
<name>RT02_NEUCR</name>
<dbReference type="EMBL" id="CM002236">
    <property type="protein sequence ID" value="EAA35489.1"/>
    <property type="molecule type" value="Genomic_DNA"/>
</dbReference>
<dbReference type="RefSeq" id="XP_964725.1">
    <property type="nucleotide sequence ID" value="XM_959632.3"/>
</dbReference>
<dbReference type="PDB" id="6YW5">
    <property type="method" value="EM"/>
    <property type="resolution" value="2.85 A"/>
    <property type="chains" value="NN=1-113"/>
</dbReference>
<dbReference type="PDB" id="6YWX">
    <property type="method" value="EM"/>
    <property type="resolution" value="3.10 A"/>
    <property type="chains" value="NN=1-113"/>
</dbReference>
<dbReference type="PDBsum" id="6YW5"/>
<dbReference type="PDBsum" id="6YWX"/>
<dbReference type="EMDB" id="EMD-10958"/>
<dbReference type="EMDB" id="EMD-10978"/>
<dbReference type="SMR" id="Q7SF85"/>
<dbReference type="FunCoup" id="Q7SF85">
    <property type="interactions" value="529"/>
</dbReference>
<dbReference type="STRING" id="367110.Q7SF85"/>
<dbReference type="PaxDb" id="5141-EFNCRP00000000753"/>
<dbReference type="EnsemblFungi" id="EAA35489">
    <property type="protein sequence ID" value="EAA35489"/>
    <property type="gene ID" value="NCU00564"/>
</dbReference>
<dbReference type="GeneID" id="3880874"/>
<dbReference type="KEGG" id="ncr:NCU00564"/>
<dbReference type="VEuPathDB" id="FungiDB:NCU00564"/>
<dbReference type="HOGENOM" id="CLU_139869_2_0_1"/>
<dbReference type="InParanoid" id="Q7SF85"/>
<dbReference type="OrthoDB" id="413436at2759"/>
<dbReference type="Proteomes" id="UP000001805">
    <property type="component" value="Chromosome 1, Linkage Group I"/>
</dbReference>
<dbReference type="GO" id="GO:0005763">
    <property type="term" value="C:mitochondrial small ribosomal subunit"/>
    <property type="evidence" value="ECO:0000318"/>
    <property type="project" value="GO_Central"/>
</dbReference>
<dbReference type="GO" id="GO:0003735">
    <property type="term" value="F:structural constituent of ribosome"/>
    <property type="evidence" value="ECO:0000318"/>
    <property type="project" value="GO_Central"/>
</dbReference>
<dbReference type="GO" id="GO:0006412">
    <property type="term" value="P:translation"/>
    <property type="evidence" value="ECO:0000318"/>
    <property type="project" value="GO_Central"/>
</dbReference>
<dbReference type="FunFam" id="1.10.287.1480:FF:000001">
    <property type="entry name" value="30S ribosomal protein S14"/>
    <property type="match status" value="1"/>
</dbReference>
<dbReference type="Gene3D" id="1.10.287.1480">
    <property type="match status" value="1"/>
</dbReference>
<dbReference type="InterPro" id="IPR001209">
    <property type="entry name" value="Ribosomal_uS14"/>
</dbReference>
<dbReference type="NCBIfam" id="NF006477">
    <property type="entry name" value="PRK08881.1"/>
    <property type="match status" value="1"/>
</dbReference>
<dbReference type="PANTHER" id="PTHR19836">
    <property type="entry name" value="30S RIBOSOMAL PROTEIN S14"/>
    <property type="match status" value="1"/>
</dbReference>
<dbReference type="PANTHER" id="PTHR19836:SF19">
    <property type="entry name" value="SMALL RIBOSOMAL SUBUNIT PROTEIN US14M"/>
    <property type="match status" value="1"/>
</dbReference>
<dbReference type="Pfam" id="PF00253">
    <property type="entry name" value="Ribosomal_S14"/>
    <property type="match status" value="1"/>
</dbReference>
<dbReference type="SUPFAM" id="SSF57716">
    <property type="entry name" value="Glucocorticoid receptor-like (DNA-binding domain)"/>
    <property type="match status" value="1"/>
</dbReference>
<comment type="function">
    <text evidence="4">Component of the mitochondrial ribosome (mitoribosome), a dedicated translation machinery responsible for the synthesis of mitochondrial genome-encoded proteins, including at least some of the essential transmembrane subunits of the mitochondrial respiratory chain. The mitoribosomes are attached to the mitochondrial inner membrane and translation products are cotranslationally integrated into the membrane.</text>
</comment>
<comment type="subunit">
    <text evidence="1">Component of the mitochondrial small ribosomal subunit (mt-SSU). Mature N.crassa 74S mitochondrial ribosomes consist of a small (37S) and a large (54S) subunit. The 37S small subunit contains a 16S ribosomal RNA (16S mt-rRNA) and 32 different proteins. The 54S large subunit contains a 23S rRNA (23S mt-rRNA) and 42 different proteins.</text>
</comment>
<comment type="subcellular location">
    <subcellularLocation>
        <location evidence="1">Mitochondrion</location>
    </subcellularLocation>
</comment>
<comment type="similarity">
    <text evidence="3">Belongs to the universal ribosomal protein uS14 family.</text>
</comment>
<keyword id="KW-0002">3D-structure</keyword>
<keyword id="KW-0496">Mitochondrion</keyword>
<keyword id="KW-1185">Reference proteome</keyword>
<keyword id="KW-0687">Ribonucleoprotein</keyword>
<keyword id="KW-0689">Ribosomal protein</keyword>
<reference key="1">
    <citation type="journal article" date="2003" name="Nature">
        <title>The genome sequence of the filamentous fungus Neurospora crassa.</title>
        <authorList>
            <person name="Galagan J.E."/>
            <person name="Calvo S.E."/>
            <person name="Borkovich K.A."/>
            <person name="Selker E.U."/>
            <person name="Read N.D."/>
            <person name="Jaffe D.B."/>
            <person name="FitzHugh W."/>
            <person name="Ma L.-J."/>
            <person name="Smirnov S."/>
            <person name="Purcell S."/>
            <person name="Rehman B."/>
            <person name="Elkins T."/>
            <person name="Engels R."/>
            <person name="Wang S."/>
            <person name="Nielsen C.B."/>
            <person name="Butler J."/>
            <person name="Endrizzi M."/>
            <person name="Qui D."/>
            <person name="Ianakiev P."/>
            <person name="Bell-Pedersen D."/>
            <person name="Nelson M.A."/>
            <person name="Werner-Washburne M."/>
            <person name="Selitrennikoff C.P."/>
            <person name="Kinsey J.A."/>
            <person name="Braun E.L."/>
            <person name="Zelter A."/>
            <person name="Schulte U."/>
            <person name="Kothe G.O."/>
            <person name="Jedd G."/>
            <person name="Mewes H.-W."/>
            <person name="Staben C."/>
            <person name="Marcotte E."/>
            <person name="Greenberg D."/>
            <person name="Roy A."/>
            <person name="Foley K."/>
            <person name="Naylor J."/>
            <person name="Stange-Thomann N."/>
            <person name="Barrett R."/>
            <person name="Gnerre S."/>
            <person name="Kamal M."/>
            <person name="Kamvysselis M."/>
            <person name="Mauceli E.W."/>
            <person name="Bielke C."/>
            <person name="Rudd S."/>
            <person name="Frishman D."/>
            <person name="Krystofova S."/>
            <person name="Rasmussen C."/>
            <person name="Metzenberg R.L."/>
            <person name="Perkins D.D."/>
            <person name="Kroken S."/>
            <person name="Cogoni C."/>
            <person name="Macino G."/>
            <person name="Catcheside D.E.A."/>
            <person name="Li W."/>
            <person name="Pratt R.J."/>
            <person name="Osmani S.A."/>
            <person name="DeSouza C.P.C."/>
            <person name="Glass N.L."/>
            <person name="Orbach M.J."/>
            <person name="Berglund J.A."/>
            <person name="Voelker R."/>
            <person name="Yarden O."/>
            <person name="Plamann M."/>
            <person name="Seiler S."/>
            <person name="Dunlap J.C."/>
            <person name="Radford A."/>
            <person name="Aramayo R."/>
            <person name="Natvig D.O."/>
            <person name="Alex L.A."/>
            <person name="Mannhaupt G."/>
            <person name="Ebbole D.J."/>
            <person name="Freitag M."/>
            <person name="Paulsen I."/>
            <person name="Sachs M.S."/>
            <person name="Lander E.S."/>
            <person name="Nusbaum C."/>
            <person name="Birren B.W."/>
        </authorList>
    </citation>
    <scope>NUCLEOTIDE SEQUENCE [LARGE SCALE GENOMIC DNA]</scope>
    <source>
        <strain>ATCC 24698 / 74-OR23-1A / CBS 708.71 / DSM 1257 / FGSC 987</strain>
    </source>
</reference>
<reference evidence="5 6" key="2">
    <citation type="journal article" date="2020" name="Nat. Commun.">
        <title>Analysis of translating mitoribosome reveals functional characteristics of translation in mitochondria of fungi.</title>
        <authorList>
            <person name="Itoh Y."/>
            <person name="Naschberger A."/>
            <person name="Mortezaei N."/>
            <person name="Herrmann J.M."/>
            <person name="Amunts A."/>
        </authorList>
    </citation>
    <scope>STRUCTURE BY ELECTRON MICROSCOPY (2.85 ANGSTROMS)</scope>
</reference>